<comment type="catalytic activity">
    <reaction evidence="1">
        <text>urea + 2 H2O + H(+) = hydrogencarbonate + 2 NH4(+)</text>
        <dbReference type="Rhea" id="RHEA:20557"/>
        <dbReference type="ChEBI" id="CHEBI:15377"/>
        <dbReference type="ChEBI" id="CHEBI:15378"/>
        <dbReference type="ChEBI" id="CHEBI:16199"/>
        <dbReference type="ChEBI" id="CHEBI:17544"/>
        <dbReference type="ChEBI" id="CHEBI:28938"/>
        <dbReference type="EC" id="3.5.1.5"/>
    </reaction>
</comment>
<comment type="cofactor">
    <cofactor evidence="1">
        <name>Ni cation</name>
        <dbReference type="ChEBI" id="CHEBI:25516"/>
    </cofactor>
    <text evidence="1">Binds 2 nickel ions per subunit.</text>
</comment>
<comment type="pathway">
    <text evidence="1">Nitrogen metabolism; urea degradation; CO(2) and NH(3) from urea (urease route): step 1/1.</text>
</comment>
<comment type="subunit">
    <text evidence="1">Heterotrimer of UreA (gamma), UreB (beta) and UreC (alpha) subunits. Three heterotrimers associate to form the active enzyme.</text>
</comment>
<comment type="subcellular location">
    <subcellularLocation>
        <location evidence="1">Cytoplasm</location>
    </subcellularLocation>
</comment>
<comment type="PTM">
    <text evidence="1">Carboxylation allows a single lysine to coordinate two nickel ions.</text>
</comment>
<comment type="similarity">
    <text evidence="1">Belongs to the metallo-dependent hydrolases superfamily. Urease alpha subunit family.</text>
</comment>
<dbReference type="EC" id="3.5.1.5" evidence="1"/>
<dbReference type="EMBL" id="BA000019">
    <property type="protein sequence ID" value="BAB75369.1"/>
    <property type="molecule type" value="Genomic_DNA"/>
</dbReference>
<dbReference type="PIR" id="AG2264">
    <property type="entry name" value="AG2264"/>
</dbReference>
<dbReference type="RefSeq" id="WP_010997814.1">
    <property type="nucleotide sequence ID" value="NZ_RSCN01000044.1"/>
</dbReference>
<dbReference type="SMR" id="Q8YQZ0"/>
<dbReference type="STRING" id="103690.gene:10495712"/>
<dbReference type="MEROPS" id="M38.982"/>
<dbReference type="KEGG" id="ana:alr3670"/>
<dbReference type="eggNOG" id="COG0804">
    <property type="taxonomic scope" value="Bacteria"/>
</dbReference>
<dbReference type="OrthoDB" id="9802793at2"/>
<dbReference type="UniPathway" id="UPA00258">
    <property type="reaction ID" value="UER00370"/>
</dbReference>
<dbReference type="Proteomes" id="UP000002483">
    <property type="component" value="Chromosome"/>
</dbReference>
<dbReference type="GO" id="GO:0005737">
    <property type="term" value="C:cytoplasm"/>
    <property type="evidence" value="ECO:0007669"/>
    <property type="project" value="UniProtKB-SubCell"/>
</dbReference>
<dbReference type="GO" id="GO:0016151">
    <property type="term" value="F:nickel cation binding"/>
    <property type="evidence" value="ECO:0007669"/>
    <property type="project" value="UniProtKB-UniRule"/>
</dbReference>
<dbReference type="GO" id="GO:0009039">
    <property type="term" value="F:urease activity"/>
    <property type="evidence" value="ECO:0007669"/>
    <property type="project" value="UniProtKB-UniRule"/>
</dbReference>
<dbReference type="GO" id="GO:0043419">
    <property type="term" value="P:urea catabolic process"/>
    <property type="evidence" value="ECO:0007669"/>
    <property type="project" value="UniProtKB-UniRule"/>
</dbReference>
<dbReference type="CDD" id="cd00375">
    <property type="entry name" value="Urease_alpha"/>
    <property type="match status" value="1"/>
</dbReference>
<dbReference type="Gene3D" id="3.20.20.140">
    <property type="entry name" value="Metal-dependent hydrolases"/>
    <property type="match status" value="1"/>
</dbReference>
<dbReference type="Gene3D" id="2.30.40.10">
    <property type="entry name" value="Urease, subunit C, domain 1"/>
    <property type="match status" value="1"/>
</dbReference>
<dbReference type="HAMAP" id="MF_01953">
    <property type="entry name" value="Urease_alpha"/>
    <property type="match status" value="1"/>
</dbReference>
<dbReference type="InterPro" id="IPR006680">
    <property type="entry name" value="Amidohydro-rel"/>
</dbReference>
<dbReference type="InterPro" id="IPR011059">
    <property type="entry name" value="Metal-dep_hydrolase_composite"/>
</dbReference>
<dbReference type="InterPro" id="IPR032466">
    <property type="entry name" value="Metal_Hydrolase"/>
</dbReference>
<dbReference type="InterPro" id="IPR011612">
    <property type="entry name" value="Urease_alpha_N_dom"/>
</dbReference>
<dbReference type="InterPro" id="IPR050112">
    <property type="entry name" value="Urease_alpha_subunit"/>
</dbReference>
<dbReference type="InterPro" id="IPR017950">
    <property type="entry name" value="Urease_AS"/>
</dbReference>
<dbReference type="InterPro" id="IPR005848">
    <property type="entry name" value="Urease_asu"/>
</dbReference>
<dbReference type="InterPro" id="IPR017951">
    <property type="entry name" value="Urease_asu_c"/>
</dbReference>
<dbReference type="InterPro" id="IPR029754">
    <property type="entry name" value="Urease_Ni-bd"/>
</dbReference>
<dbReference type="NCBIfam" id="NF009685">
    <property type="entry name" value="PRK13206.1"/>
    <property type="match status" value="1"/>
</dbReference>
<dbReference type="NCBIfam" id="NF009686">
    <property type="entry name" value="PRK13207.1"/>
    <property type="match status" value="1"/>
</dbReference>
<dbReference type="NCBIfam" id="TIGR01792">
    <property type="entry name" value="urease_alph"/>
    <property type="match status" value="1"/>
</dbReference>
<dbReference type="PANTHER" id="PTHR43440">
    <property type="entry name" value="UREASE"/>
    <property type="match status" value="1"/>
</dbReference>
<dbReference type="PANTHER" id="PTHR43440:SF1">
    <property type="entry name" value="UREASE"/>
    <property type="match status" value="1"/>
</dbReference>
<dbReference type="Pfam" id="PF01979">
    <property type="entry name" value="Amidohydro_1"/>
    <property type="match status" value="1"/>
</dbReference>
<dbReference type="Pfam" id="PF00449">
    <property type="entry name" value="Urease_alpha"/>
    <property type="match status" value="1"/>
</dbReference>
<dbReference type="PRINTS" id="PR01752">
    <property type="entry name" value="UREASE"/>
</dbReference>
<dbReference type="SUPFAM" id="SSF51338">
    <property type="entry name" value="Composite domain of metallo-dependent hydrolases"/>
    <property type="match status" value="2"/>
</dbReference>
<dbReference type="SUPFAM" id="SSF51556">
    <property type="entry name" value="Metallo-dependent hydrolases"/>
    <property type="match status" value="1"/>
</dbReference>
<dbReference type="PROSITE" id="PS01120">
    <property type="entry name" value="UREASE_1"/>
    <property type="match status" value="1"/>
</dbReference>
<dbReference type="PROSITE" id="PS00145">
    <property type="entry name" value="UREASE_2"/>
    <property type="match status" value="1"/>
</dbReference>
<dbReference type="PROSITE" id="PS51368">
    <property type="entry name" value="UREASE_3"/>
    <property type="match status" value="1"/>
</dbReference>
<gene>
    <name evidence="1" type="primary">ureC</name>
    <name type="ordered locus">alr3670</name>
</gene>
<protein>
    <recommendedName>
        <fullName evidence="1">Urease subunit alpha</fullName>
        <ecNumber evidence="1">3.5.1.5</ecNumber>
    </recommendedName>
    <alternativeName>
        <fullName evidence="1">Urea amidohydrolase subunit alpha</fullName>
    </alternativeName>
</protein>
<sequence length="568" mass="61156">MPYRMSRQAYAETYGPTVGDRIRLADTELFIQVEQDFTTYGDEVKFGGGKVIRDGMGQSPIANADGAVDLVITNALILDWWGIVKADIGIKDGKIFKIGKAGNPYIQDHVDIIIGPGTEALAGEGMILTAGGIDTHIHFICPQQIEVAIASGITTMIGGGTGPATGTNATTCTPGPWNMYRMLQAADAFPMNLGFLGKGNASQPQGLVEQIFAGAIGLKLHEDWGTTPATIDTCLTVADEYDVQVAIHTDTLNEAGFVEDTIAAFKNRAIHTYHTEGAGGGHAPDIIKVCGQANVLPSSTNPTRPYTVNTLDEHLDMLMVCHHLDPAIAEDVAFAESRIRRETIAAEDILHDLGAFSMIASDSQAMGRVGEVIIRTWQTSHKMKVQRGSLTGDAEADNLRAKRYVAKYTINPAITHGIAQYVGSVEAGKLADLCLWRPAFFGVKPEIVIKGGMIAWSQMGDANASIPTPQPVHMRPMFGSFAGARNATSLTFVSQAALEREIPQQLGLRKSAVAVSGTRQLTKQDMKLNDALPHIEVDSESYEVRADGELLTCEPATVLPMAQRYFLF</sequence>
<proteinExistence type="inferred from homology"/>
<reference key="1">
    <citation type="journal article" date="2001" name="DNA Res.">
        <title>Complete genomic sequence of the filamentous nitrogen-fixing cyanobacterium Anabaena sp. strain PCC 7120.</title>
        <authorList>
            <person name="Kaneko T."/>
            <person name="Nakamura Y."/>
            <person name="Wolk C.P."/>
            <person name="Kuritz T."/>
            <person name="Sasamoto S."/>
            <person name="Watanabe A."/>
            <person name="Iriguchi M."/>
            <person name="Ishikawa A."/>
            <person name="Kawashima K."/>
            <person name="Kimura T."/>
            <person name="Kishida Y."/>
            <person name="Kohara M."/>
            <person name="Matsumoto M."/>
            <person name="Matsuno A."/>
            <person name="Muraki A."/>
            <person name="Nakazaki N."/>
            <person name="Shimpo S."/>
            <person name="Sugimoto M."/>
            <person name="Takazawa M."/>
            <person name="Yamada M."/>
            <person name="Yasuda M."/>
            <person name="Tabata S."/>
        </authorList>
    </citation>
    <scope>NUCLEOTIDE SEQUENCE [LARGE SCALE GENOMIC DNA]</scope>
    <source>
        <strain>PCC 7120 / SAG 25.82 / UTEX 2576</strain>
    </source>
</reference>
<organism>
    <name type="scientific">Nostoc sp. (strain PCC 7120 / SAG 25.82 / UTEX 2576)</name>
    <dbReference type="NCBI Taxonomy" id="103690"/>
    <lineage>
        <taxon>Bacteria</taxon>
        <taxon>Bacillati</taxon>
        <taxon>Cyanobacteriota</taxon>
        <taxon>Cyanophyceae</taxon>
        <taxon>Nostocales</taxon>
        <taxon>Nostocaceae</taxon>
        <taxon>Nostoc</taxon>
    </lineage>
</organism>
<evidence type="ECO:0000255" key="1">
    <source>
        <dbReference type="HAMAP-Rule" id="MF_01953"/>
    </source>
</evidence>
<feature type="chain" id="PRO_0000234131" description="Urease subunit alpha">
    <location>
        <begin position="1"/>
        <end position="568"/>
    </location>
</feature>
<feature type="domain" description="Urease" evidence="1">
    <location>
        <begin position="131"/>
        <end position="568"/>
    </location>
</feature>
<feature type="active site" description="Proton donor" evidence="1">
    <location>
        <position position="322"/>
    </location>
</feature>
<feature type="binding site" evidence="1">
    <location>
        <position position="136"/>
    </location>
    <ligand>
        <name>Ni(2+)</name>
        <dbReference type="ChEBI" id="CHEBI:49786"/>
        <label>1</label>
    </ligand>
</feature>
<feature type="binding site" evidence="1">
    <location>
        <position position="138"/>
    </location>
    <ligand>
        <name>Ni(2+)</name>
        <dbReference type="ChEBI" id="CHEBI:49786"/>
        <label>1</label>
    </ligand>
</feature>
<feature type="binding site" description="via carbamate group" evidence="1">
    <location>
        <position position="219"/>
    </location>
    <ligand>
        <name>Ni(2+)</name>
        <dbReference type="ChEBI" id="CHEBI:49786"/>
        <label>1</label>
    </ligand>
</feature>
<feature type="binding site" description="via carbamate group" evidence="1">
    <location>
        <position position="219"/>
    </location>
    <ligand>
        <name>Ni(2+)</name>
        <dbReference type="ChEBI" id="CHEBI:49786"/>
        <label>2</label>
    </ligand>
</feature>
<feature type="binding site" evidence="1">
    <location>
        <position position="221"/>
    </location>
    <ligand>
        <name>substrate</name>
    </ligand>
</feature>
<feature type="binding site" evidence="1">
    <location>
        <position position="248"/>
    </location>
    <ligand>
        <name>Ni(2+)</name>
        <dbReference type="ChEBI" id="CHEBI:49786"/>
        <label>2</label>
    </ligand>
</feature>
<feature type="binding site" evidence="1">
    <location>
        <position position="274"/>
    </location>
    <ligand>
        <name>Ni(2+)</name>
        <dbReference type="ChEBI" id="CHEBI:49786"/>
        <label>2</label>
    </ligand>
</feature>
<feature type="binding site" evidence="1">
    <location>
        <position position="362"/>
    </location>
    <ligand>
        <name>Ni(2+)</name>
        <dbReference type="ChEBI" id="CHEBI:49786"/>
        <label>1</label>
    </ligand>
</feature>
<feature type="modified residue" description="N6-carboxylysine" evidence="1">
    <location>
        <position position="219"/>
    </location>
</feature>
<accession>Q8YQZ0</accession>
<keyword id="KW-0963">Cytoplasm</keyword>
<keyword id="KW-0378">Hydrolase</keyword>
<keyword id="KW-0479">Metal-binding</keyword>
<keyword id="KW-0533">Nickel</keyword>
<keyword id="KW-1185">Reference proteome</keyword>
<name>URE1_NOSS1</name>